<name>TIG_CHLPN</name>
<sequence length="442" mass="49840">MPRSLSNEQFSVDLEESPGCIVSALVKVSPEVLNKLNKQALKKIKKEITLPGFRKGKAPDDVIASRYPTNVRKELGELVTQDAYHALSTVGDRRPLSPKAVRSNSITQFDLQEGAKVEFSYEAFPAISDLPWENLSLPQEEAASEISDSDIEKGLTNIGMFFATKTPVERPSQEGDFISISLHVSKSNDENASSAAIFENKYFKLSEEEMTDAFKEKFLGISTGHRVVETITSPEIQSFLRGDTLTFTVNAVIEVSIPEIDDEKARQLQAESLDDLKAKLRIQLEKQAKDKQLQKRFSEAEDALAMLVDFELPTSLLEERISLITREKLLNARLIQYCSDEELEKRKSELIKEAEEDATKALKLLFLTHKIFSDEKLTISREELQYMMDVCSRERFGQQPPKDISNDTLQELVMSARDRLTYSKAIEHVLRKAELLASTPSA</sequence>
<accession>Q9Z758</accession>
<dbReference type="EC" id="5.2.1.8"/>
<dbReference type="EMBL" id="AE001363">
    <property type="protein sequence ID" value="AAD18986.1"/>
    <property type="molecule type" value="Genomic_DNA"/>
</dbReference>
<dbReference type="EMBL" id="AE002161">
    <property type="protein sequence ID" value="AAF38797.1"/>
    <property type="molecule type" value="Genomic_DNA"/>
</dbReference>
<dbReference type="EMBL" id="BA000008">
    <property type="protein sequence ID" value="BAA99056.1"/>
    <property type="molecule type" value="Genomic_DNA"/>
</dbReference>
<dbReference type="EMBL" id="AE009440">
    <property type="protein sequence ID" value="AAP98806.1"/>
    <property type="molecule type" value="Genomic_DNA"/>
</dbReference>
<dbReference type="PIR" id="F86596">
    <property type="entry name" value="F86596"/>
</dbReference>
<dbReference type="PIR" id="H72028">
    <property type="entry name" value="H72028"/>
</dbReference>
<dbReference type="RefSeq" id="NP_225043.1">
    <property type="nucleotide sequence ID" value="NC_000922.1"/>
</dbReference>
<dbReference type="RefSeq" id="WP_010883483.1">
    <property type="nucleotide sequence ID" value="NZ_LN847257.1"/>
</dbReference>
<dbReference type="SMR" id="Q9Z758"/>
<dbReference type="STRING" id="406984.CPK_ORF00254"/>
<dbReference type="GeneID" id="45050900"/>
<dbReference type="KEGG" id="cpa:CP_1021"/>
<dbReference type="KEGG" id="cpj:tigA"/>
<dbReference type="KEGG" id="cpn:CPn_0848"/>
<dbReference type="KEGG" id="cpt:CpB0877"/>
<dbReference type="PATRIC" id="fig|115713.3.peg.928"/>
<dbReference type="eggNOG" id="COG0544">
    <property type="taxonomic scope" value="Bacteria"/>
</dbReference>
<dbReference type="HOGENOM" id="CLU_065756_0_0_0"/>
<dbReference type="OrthoDB" id="9767721at2"/>
<dbReference type="Proteomes" id="UP000000583">
    <property type="component" value="Chromosome"/>
</dbReference>
<dbReference type="Proteomes" id="UP000000801">
    <property type="component" value="Chromosome"/>
</dbReference>
<dbReference type="GO" id="GO:0005737">
    <property type="term" value="C:cytoplasm"/>
    <property type="evidence" value="ECO:0007669"/>
    <property type="project" value="UniProtKB-SubCell"/>
</dbReference>
<dbReference type="GO" id="GO:0003755">
    <property type="term" value="F:peptidyl-prolyl cis-trans isomerase activity"/>
    <property type="evidence" value="ECO:0007669"/>
    <property type="project" value="UniProtKB-UniRule"/>
</dbReference>
<dbReference type="GO" id="GO:0044183">
    <property type="term" value="F:protein folding chaperone"/>
    <property type="evidence" value="ECO:0007669"/>
    <property type="project" value="TreeGrafter"/>
</dbReference>
<dbReference type="GO" id="GO:0043022">
    <property type="term" value="F:ribosome binding"/>
    <property type="evidence" value="ECO:0007669"/>
    <property type="project" value="TreeGrafter"/>
</dbReference>
<dbReference type="GO" id="GO:0051083">
    <property type="term" value="P:'de novo' cotranslational protein folding"/>
    <property type="evidence" value="ECO:0007669"/>
    <property type="project" value="TreeGrafter"/>
</dbReference>
<dbReference type="GO" id="GO:0051301">
    <property type="term" value="P:cell division"/>
    <property type="evidence" value="ECO:0007669"/>
    <property type="project" value="UniProtKB-KW"/>
</dbReference>
<dbReference type="GO" id="GO:0061077">
    <property type="term" value="P:chaperone-mediated protein folding"/>
    <property type="evidence" value="ECO:0007669"/>
    <property type="project" value="TreeGrafter"/>
</dbReference>
<dbReference type="GO" id="GO:0015031">
    <property type="term" value="P:protein transport"/>
    <property type="evidence" value="ECO:0007669"/>
    <property type="project" value="UniProtKB-UniRule"/>
</dbReference>
<dbReference type="GO" id="GO:0043335">
    <property type="term" value="P:protein unfolding"/>
    <property type="evidence" value="ECO:0007669"/>
    <property type="project" value="TreeGrafter"/>
</dbReference>
<dbReference type="Gene3D" id="3.10.50.40">
    <property type="match status" value="1"/>
</dbReference>
<dbReference type="Gene3D" id="3.30.70.1050">
    <property type="entry name" value="Trigger factor ribosome-binding domain"/>
    <property type="match status" value="1"/>
</dbReference>
<dbReference type="Gene3D" id="1.10.3120.10">
    <property type="entry name" value="Trigger factor, C-terminal domain"/>
    <property type="match status" value="1"/>
</dbReference>
<dbReference type="HAMAP" id="MF_00303">
    <property type="entry name" value="Trigger_factor_Tig"/>
    <property type="match status" value="1"/>
</dbReference>
<dbReference type="InterPro" id="IPR046357">
    <property type="entry name" value="PPIase_dom_sf"/>
</dbReference>
<dbReference type="InterPro" id="IPR005215">
    <property type="entry name" value="Trig_fac"/>
</dbReference>
<dbReference type="InterPro" id="IPR008880">
    <property type="entry name" value="Trigger_fac_C"/>
</dbReference>
<dbReference type="InterPro" id="IPR037041">
    <property type="entry name" value="Trigger_fac_C_sf"/>
</dbReference>
<dbReference type="InterPro" id="IPR008881">
    <property type="entry name" value="Trigger_fac_ribosome-bd_bac"/>
</dbReference>
<dbReference type="InterPro" id="IPR036611">
    <property type="entry name" value="Trigger_fac_ribosome-bd_sf"/>
</dbReference>
<dbReference type="InterPro" id="IPR027304">
    <property type="entry name" value="Trigger_fact/SurA_dom_sf"/>
</dbReference>
<dbReference type="NCBIfam" id="TIGR00115">
    <property type="entry name" value="tig"/>
    <property type="match status" value="1"/>
</dbReference>
<dbReference type="PANTHER" id="PTHR30560">
    <property type="entry name" value="TRIGGER FACTOR CHAPERONE AND PEPTIDYL-PROLYL CIS/TRANS ISOMERASE"/>
    <property type="match status" value="1"/>
</dbReference>
<dbReference type="PANTHER" id="PTHR30560:SF3">
    <property type="entry name" value="TRIGGER FACTOR-LIKE PROTEIN TIG, CHLOROPLASTIC"/>
    <property type="match status" value="1"/>
</dbReference>
<dbReference type="Pfam" id="PF05698">
    <property type="entry name" value="Trigger_C"/>
    <property type="match status" value="1"/>
</dbReference>
<dbReference type="Pfam" id="PF05697">
    <property type="entry name" value="Trigger_N"/>
    <property type="match status" value="1"/>
</dbReference>
<dbReference type="PIRSF" id="PIRSF003095">
    <property type="entry name" value="Trigger_factor"/>
    <property type="match status" value="1"/>
</dbReference>
<dbReference type="SUPFAM" id="SSF54534">
    <property type="entry name" value="FKBP-like"/>
    <property type="match status" value="1"/>
</dbReference>
<dbReference type="SUPFAM" id="SSF109998">
    <property type="entry name" value="Triger factor/SurA peptide-binding domain-like"/>
    <property type="match status" value="1"/>
</dbReference>
<dbReference type="SUPFAM" id="SSF102735">
    <property type="entry name" value="Trigger factor ribosome-binding domain"/>
    <property type="match status" value="1"/>
</dbReference>
<protein>
    <recommendedName>
        <fullName>Trigger factor</fullName>
        <shortName>TF</shortName>
        <ecNumber>5.2.1.8</ecNumber>
    </recommendedName>
    <alternativeName>
        <fullName>PPIase</fullName>
    </alternativeName>
</protein>
<evidence type="ECO:0000250" key="1"/>
<evidence type="ECO:0000305" key="2"/>
<keyword id="KW-0131">Cell cycle</keyword>
<keyword id="KW-0132">Cell division</keyword>
<keyword id="KW-0143">Chaperone</keyword>
<keyword id="KW-0963">Cytoplasm</keyword>
<keyword id="KW-0413">Isomerase</keyword>
<keyword id="KW-0697">Rotamase</keyword>
<reference key="1">
    <citation type="journal article" date="1999" name="Nat. Genet.">
        <title>Comparative genomes of Chlamydia pneumoniae and C. trachomatis.</title>
        <authorList>
            <person name="Kalman S."/>
            <person name="Mitchell W.P."/>
            <person name="Marathe R."/>
            <person name="Lammel C.J."/>
            <person name="Fan J."/>
            <person name="Hyman R.W."/>
            <person name="Olinger L."/>
            <person name="Grimwood J."/>
            <person name="Davis R.W."/>
            <person name="Stephens R.S."/>
        </authorList>
    </citation>
    <scope>NUCLEOTIDE SEQUENCE [LARGE SCALE GENOMIC DNA]</scope>
    <source>
        <strain>CWL029</strain>
    </source>
</reference>
<reference key="2">
    <citation type="journal article" date="2000" name="Nucleic Acids Res.">
        <title>Genome sequences of Chlamydia trachomatis MoPn and Chlamydia pneumoniae AR39.</title>
        <authorList>
            <person name="Read T.D."/>
            <person name="Brunham R.C."/>
            <person name="Shen C."/>
            <person name="Gill S.R."/>
            <person name="Heidelberg J.F."/>
            <person name="White O."/>
            <person name="Hickey E.K."/>
            <person name="Peterson J.D."/>
            <person name="Utterback T.R."/>
            <person name="Berry K.J."/>
            <person name="Bass S."/>
            <person name="Linher K.D."/>
            <person name="Weidman J.F."/>
            <person name="Khouri H.M."/>
            <person name="Craven B."/>
            <person name="Bowman C."/>
            <person name="Dodson R.J."/>
            <person name="Gwinn M.L."/>
            <person name="Nelson W.C."/>
            <person name="DeBoy R.T."/>
            <person name="Kolonay J.F."/>
            <person name="McClarty G."/>
            <person name="Salzberg S.L."/>
            <person name="Eisen J.A."/>
            <person name="Fraser C.M."/>
        </authorList>
    </citation>
    <scope>NUCLEOTIDE SEQUENCE [LARGE SCALE GENOMIC DNA]</scope>
    <source>
        <strain>AR39</strain>
    </source>
</reference>
<reference key="3">
    <citation type="journal article" date="2000" name="Nucleic Acids Res.">
        <title>Comparison of whole genome sequences of Chlamydia pneumoniae J138 from Japan and CWL029 from USA.</title>
        <authorList>
            <person name="Shirai M."/>
            <person name="Hirakawa H."/>
            <person name="Kimoto M."/>
            <person name="Tabuchi M."/>
            <person name="Kishi F."/>
            <person name="Ouchi K."/>
            <person name="Shiba T."/>
            <person name="Ishii K."/>
            <person name="Hattori M."/>
            <person name="Kuhara S."/>
            <person name="Nakazawa T."/>
        </authorList>
    </citation>
    <scope>NUCLEOTIDE SEQUENCE [LARGE SCALE GENOMIC DNA]</scope>
    <source>
        <strain>J138</strain>
    </source>
</reference>
<reference key="4">
    <citation type="submission" date="2002-05" db="EMBL/GenBank/DDBJ databases">
        <title>The genome sequence of Chlamydia pneumoniae TW183 and comparison with other Chlamydia strains based on whole genome sequence analysis.</title>
        <authorList>
            <person name="Geng M.M."/>
            <person name="Schuhmacher A."/>
            <person name="Muehldorfer I."/>
            <person name="Bensch K.W."/>
            <person name="Schaefer K.P."/>
            <person name="Schneider S."/>
            <person name="Pohl T."/>
            <person name="Essig A."/>
            <person name="Marre R."/>
            <person name="Melchers K."/>
        </authorList>
    </citation>
    <scope>NUCLEOTIDE SEQUENCE [LARGE SCALE GENOMIC DNA]</scope>
    <source>
        <strain>TW-183</strain>
    </source>
</reference>
<feature type="chain" id="PRO_0000179333" description="Trigger factor">
    <location>
        <begin position="1"/>
        <end position="442"/>
    </location>
</feature>
<feature type="domain" description="PPIase FKBP-type">
    <location>
        <begin position="175"/>
        <end position="258"/>
    </location>
</feature>
<organism>
    <name type="scientific">Chlamydia pneumoniae</name>
    <name type="common">Chlamydophila pneumoniae</name>
    <dbReference type="NCBI Taxonomy" id="83558"/>
    <lineage>
        <taxon>Bacteria</taxon>
        <taxon>Pseudomonadati</taxon>
        <taxon>Chlamydiota</taxon>
        <taxon>Chlamydiia</taxon>
        <taxon>Chlamydiales</taxon>
        <taxon>Chlamydiaceae</taxon>
        <taxon>Chlamydia/Chlamydophila group</taxon>
        <taxon>Chlamydia</taxon>
    </lineage>
</organism>
<gene>
    <name type="primary">tig</name>
    <name type="synonym">tigA</name>
    <name type="ordered locus">CPn_0848</name>
    <name type="ordered locus">CP_1021</name>
    <name type="ordered locus">CpB0877</name>
</gene>
<comment type="function">
    <text evidence="1">Involved in protein export. Acts as a chaperone by maintaining the newly synthesized protein in an open conformation. Functions as a peptidyl-prolyl cis-trans isomerase (By similarity).</text>
</comment>
<comment type="catalytic activity">
    <reaction>
        <text>[protein]-peptidylproline (omega=180) = [protein]-peptidylproline (omega=0)</text>
        <dbReference type="Rhea" id="RHEA:16237"/>
        <dbReference type="Rhea" id="RHEA-COMP:10747"/>
        <dbReference type="Rhea" id="RHEA-COMP:10748"/>
        <dbReference type="ChEBI" id="CHEBI:83833"/>
        <dbReference type="ChEBI" id="CHEBI:83834"/>
        <dbReference type="EC" id="5.2.1.8"/>
    </reaction>
</comment>
<comment type="subcellular location">
    <subcellularLocation>
        <location>Cytoplasm</location>
    </subcellularLocation>
    <text evidence="1">About half TF is bound to the ribosome near the polypeptide exit tunnel while the other half is free in the cytoplasm.</text>
</comment>
<comment type="domain">
    <text evidence="1">Consists of 3 domains; the N-terminus binds the ribosome, the middle domain has PPIase activity, while the C-terminus has intrinsic chaperone activity on its own.</text>
</comment>
<comment type="similarity">
    <text evidence="2">Belongs to the FKBP-type PPIase family. Tig subfamily.</text>
</comment>
<proteinExistence type="inferred from homology"/>